<gene>
    <name evidence="1" type="primary">msrP</name>
    <name type="ordered locus">HD_1916</name>
</gene>
<protein>
    <recommendedName>
        <fullName evidence="1">Protein-methionine-sulfoxide reductase catalytic subunit MsrP</fullName>
        <ecNumber evidence="1">1.8.5.-</ecNumber>
    </recommendedName>
</protein>
<reference key="1">
    <citation type="submission" date="2003-06" db="EMBL/GenBank/DDBJ databases">
        <title>The complete genome sequence of Haemophilus ducreyi.</title>
        <authorList>
            <person name="Munson R.S. Jr."/>
            <person name="Ray W.C."/>
            <person name="Mahairas G."/>
            <person name="Sabo P."/>
            <person name="Mungur R."/>
            <person name="Johnson L."/>
            <person name="Nguyen D."/>
            <person name="Wang J."/>
            <person name="Forst C."/>
            <person name="Hood L."/>
        </authorList>
    </citation>
    <scope>NUCLEOTIDE SEQUENCE [LARGE SCALE GENOMIC DNA]</scope>
    <source>
        <strain>35000HP / ATCC 700724</strain>
    </source>
</reference>
<dbReference type="EC" id="1.8.5.-" evidence="1"/>
<dbReference type="EMBL" id="AE017143">
    <property type="protein sequence ID" value="AAP96639.1"/>
    <property type="molecule type" value="Genomic_DNA"/>
</dbReference>
<dbReference type="RefSeq" id="WP_010945667.1">
    <property type="nucleotide sequence ID" value="NC_002940.2"/>
</dbReference>
<dbReference type="SMR" id="Q7VKI8"/>
<dbReference type="STRING" id="233412.HD_1916"/>
<dbReference type="KEGG" id="hdu:HD_1916"/>
<dbReference type="eggNOG" id="COG2041">
    <property type="taxonomic scope" value="Bacteria"/>
</dbReference>
<dbReference type="HOGENOM" id="CLU_045520_0_0_6"/>
<dbReference type="OrthoDB" id="9795587at2"/>
<dbReference type="Proteomes" id="UP000001022">
    <property type="component" value="Chromosome"/>
</dbReference>
<dbReference type="GO" id="GO:0042597">
    <property type="term" value="C:periplasmic space"/>
    <property type="evidence" value="ECO:0007669"/>
    <property type="project" value="UniProtKB-SubCell"/>
</dbReference>
<dbReference type="GO" id="GO:0046872">
    <property type="term" value="F:metal ion binding"/>
    <property type="evidence" value="ECO:0007669"/>
    <property type="project" value="UniProtKB-KW"/>
</dbReference>
<dbReference type="GO" id="GO:0043546">
    <property type="term" value="F:molybdopterin cofactor binding"/>
    <property type="evidence" value="ECO:0007669"/>
    <property type="project" value="UniProtKB-UniRule"/>
</dbReference>
<dbReference type="GO" id="GO:0016672">
    <property type="term" value="F:oxidoreductase activity, acting on a sulfur group of donors, quinone or similar compound as acceptor"/>
    <property type="evidence" value="ECO:0007669"/>
    <property type="project" value="UniProtKB-UniRule"/>
</dbReference>
<dbReference type="GO" id="GO:0030091">
    <property type="term" value="P:protein repair"/>
    <property type="evidence" value="ECO:0007669"/>
    <property type="project" value="UniProtKB-UniRule"/>
</dbReference>
<dbReference type="Gene3D" id="3.90.420.10">
    <property type="entry name" value="Oxidoreductase, molybdopterin-binding domain"/>
    <property type="match status" value="1"/>
</dbReference>
<dbReference type="HAMAP" id="MF_01206">
    <property type="entry name" value="MsrP"/>
    <property type="match status" value="1"/>
</dbReference>
<dbReference type="InterPro" id="IPR022867">
    <property type="entry name" value="MsrP"/>
</dbReference>
<dbReference type="InterPro" id="IPR000572">
    <property type="entry name" value="OxRdtase_Mopterin-bd_dom"/>
</dbReference>
<dbReference type="InterPro" id="IPR036374">
    <property type="entry name" value="OxRdtase_Mopterin-bd_sf"/>
</dbReference>
<dbReference type="NCBIfam" id="NF003767">
    <property type="entry name" value="PRK05363.1"/>
    <property type="match status" value="1"/>
</dbReference>
<dbReference type="PANTHER" id="PTHR43032">
    <property type="entry name" value="PROTEIN-METHIONINE-SULFOXIDE REDUCTASE"/>
    <property type="match status" value="1"/>
</dbReference>
<dbReference type="PANTHER" id="PTHR43032:SF3">
    <property type="entry name" value="PROTEIN-METHIONINE-SULFOXIDE REDUCTASE CATALYTIC SUBUNIT MSRP"/>
    <property type="match status" value="1"/>
</dbReference>
<dbReference type="Pfam" id="PF00174">
    <property type="entry name" value="Oxidored_molyb"/>
    <property type="match status" value="1"/>
</dbReference>
<dbReference type="SUPFAM" id="SSF56524">
    <property type="entry name" value="Oxidoreductase molybdopterin-binding domain"/>
    <property type="match status" value="1"/>
</dbReference>
<proteinExistence type="inferred from homology"/>
<accession>Q7VKI8</accession>
<name>MSRP_HAEDU</name>
<comment type="function">
    <text evidence="1">Part of the MsrPQ system that repairs oxidized periplasmic proteins containing methionine sulfoxide residues (Met-O), using respiratory chain electrons. Thus protects these proteins from oxidative-stress damage caused by reactive species of oxygen and chlorine generated by the host defense mechanisms. MsrPQ is essential for the maintenance of envelope integrity under bleach stress, rescuing a wide series of structurally unrelated periplasmic proteins from methionine oxidation. The catalytic subunit MsrP is non-stereospecific, being able to reduce both (R-) and (S-) diastereoisomers of methionine sulfoxide.</text>
</comment>
<comment type="catalytic activity">
    <reaction evidence="1">
        <text>L-methionyl-[protein] + a quinone + H2O = L-methionyl-(S)-S-oxide-[protein] + a quinol</text>
        <dbReference type="Rhea" id="RHEA:51292"/>
        <dbReference type="Rhea" id="RHEA-COMP:12313"/>
        <dbReference type="Rhea" id="RHEA-COMP:12315"/>
        <dbReference type="ChEBI" id="CHEBI:15377"/>
        <dbReference type="ChEBI" id="CHEBI:16044"/>
        <dbReference type="ChEBI" id="CHEBI:24646"/>
        <dbReference type="ChEBI" id="CHEBI:44120"/>
        <dbReference type="ChEBI" id="CHEBI:132124"/>
    </reaction>
</comment>
<comment type="catalytic activity">
    <reaction evidence="1">
        <text>L-methionyl-[protein] + a quinone + H2O = L-methionyl-(R)-S-oxide-[protein] + a quinol</text>
        <dbReference type="Rhea" id="RHEA:51296"/>
        <dbReference type="Rhea" id="RHEA-COMP:12313"/>
        <dbReference type="Rhea" id="RHEA-COMP:12314"/>
        <dbReference type="ChEBI" id="CHEBI:15377"/>
        <dbReference type="ChEBI" id="CHEBI:16044"/>
        <dbReference type="ChEBI" id="CHEBI:24646"/>
        <dbReference type="ChEBI" id="CHEBI:45764"/>
        <dbReference type="ChEBI" id="CHEBI:132124"/>
    </reaction>
</comment>
<comment type="cofactor">
    <cofactor evidence="1">
        <name>Mo-molybdopterin</name>
        <dbReference type="ChEBI" id="CHEBI:71302"/>
    </cofactor>
    <text evidence="1">Binds 1 Mo-molybdopterin (Mo-MPT) cofactor per subunit.</text>
</comment>
<comment type="subunit">
    <text evidence="1">Heterodimer of a catalytic subunit (MsrP) and a heme-binding subunit (MsrQ).</text>
</comment>
<comment type="subcellular location">
    <subcellularLocation>
        <location evidence="1">Periplasm</location>
    </subcellularLocation>
    <text evidence="1">Is attached to the inner membrane when interacting with the MsrQ subunit.</text>
</comment>
<comment type="PTM">
    <text evidence="1">Predicted to be exported by the Tat system. The position of the signal peptide cleavage has not been experimentally proven.</text>
</comment>
<comment type="similarity">
    <text evidence="1">Belongs to the MsrP family.</text>
</comment>
<evidence type="ECO:0000255" key="1">
    <source>
        <dbReference type="HAMAP-Rule" id="MF_01206"/>
    </source>
</evidence>
<keyword id="KW-0479">Metal-binding</keyword>
<keyword id="KW-0500">Molybdenum</keyword>
<keyword id="KW-0560">Oxidoreductase</keyword>
<keyword id="KW-0574">Periplasm</keyword>
<keyword id="KW-1185">Reference proteome</keyword>
<keyword id="KW-0732">Signal</keyword>
<organism>
    <name type="scientific">Haemophilus ducreyi (strain 35000HP / ATCC 700724)</name>
    <dbReference type="NCBI Taxonomy" id="233412"/>
    <lineage>
        <taxon>Bacteria</taxon>
        <taxon>Pseudomonadati</taxon>
        <taxon>Pseudomonadota</taxon>
        <taxon>Gammaproteobacteria</taxon>
        <taxon>Pasteurellales</taxon>
        <taxon>Pasteurellaceae</taxon>
        <taxon>Haemophilus</taxon>
    </lineage>
</organism>
<sequence length="318" mass="36057">MKQLMMSDVTPEEIFNQRRQIIKSMGLGIATLGLPNIAFAEENVSELKALTFKAASKSDLALTPENKIIGYNNFYEFGTDKAAPAKFAKDFKTDPWQLEISGEVENPFVLNHQQLFNTFPLEERIYRFRCVEAWSMVVPWIGFELARLVEMAKPSSKAKYVVFHTLYDPEQMPGQKNPLFGGSIDYPYVEALTIEEAMNSLTLLSVGLYGKMLPPQNGAPIRLVMPWKYGFKSIKSIVKISFSETRPKTTWESLAPTEYGFYANVNPNVDHPRWSQGSERVIGAGGLLSVKRQPTLMFNGYEDQVAHLYKDLDLKVNF</sequence>
<feature type="signal peptide" description="Tat-type signal" evidence="1">
    <location>
        <begin position="1"/>
        <end position="40"/>
    </location>
</feature>
<feature type="chain" id="PRO_0000070688" description="Protein-methionine-sulfoxide reductase catalytic subunit MsrP" evidence="1">
    <location>
        <begin position="41"/>
        <end position="318"/>
    </location>
</feature>
<feature type="binding site" evidence="1">
    <location>
        <position position="72"/>
    </location>
    <ligand>
        <name>Mo-molybdopterin</name>
        <dbReference type="ChEBI" id="CHEBI:71302"/>
    </ligand>
</feature>
<feature type="binding site" evidence="1">
    <location>
        <begin position="75"/>
        <end position="76"/>
    </location>
    <ligand>
        <name>Mo-molybdopterin</name>
        <dbReference type="ChEBI" id="CHEBI:71302"/>
    </ligand>
</feature>
<feature type="binding site" evidence="1">
    <location>
        <position position="130"/>
    </location>
    <ligand>
        <name>Mo-molybdopterin</name>
        <dbReference type="ChEBI" id="CHEBI:71302"/>
    </ligand>
    <ligandPart>
        <name>Mo</name>
        <dbReference type="ChEBI" id="CHEBI:28685"/>
    </ligandPart>
</feature>
<feature type="binding site" evidence="1">
    <location>
        <position position="165"/>
    </location>
    <ligand>
        <name>Mo-molybdopterin</name>
        <dbReference type="ChEBI" id="CHEBI:71302"/>
    </ligand>
</feature>
<feature type="binding site" evidence="1">
    <location>
        <position position="217"/>
    </location>
    <ligand>
        <name>Mo-molybdopterin</name>
        <dbReference type="ChEBI" id="CHEBI:71302"/>
    </ligand>
</feature>
<feature type="binding site" evidence="1">
    <location>
        <position position="222"/>
    </location>
    <ligand>
        <name>Mo-molybdopterin</name>
        <dbReference type="ChEBI" id="CHEBI:71302"/>
    </ligand>
</feature>
<feature type="binding site" evidence="1">
    <location>
        <begin position="233"/>
        <end position="235"/>
    </location>
    <ligand>
        <name>Mo-molybdopterin</name>
        <dbReference type="ChEBI" id="CHEBI:71302"/>
    </ligand>
</feature>